<name>3SP1_DENJA</name>
<dbReference type="SMR" id="P01413"/>
<dbReference type="GO" id="GO:0005576">
    <property type="term" value="C:extracellular region"/>
    <property type="evidence" value="ECO:0007669"/>
    <property type="project" value="UniProtKB-SubCell"/>
</dbReference>
<dbReference type="GO" id="GO:0090729">
    <property type="term" value="F:toxin activity"/>
    <property type="evidence" value="ECO:0007669"/>
    <property type="project" value="UniProtKB-KW"/>
</dbReference>
<dbReference type="Gene3D" id="2.10.60.10">
    <property type="entry name" value="CD59"/>
    <property type="match status" value="1"/>
</dbReference>
<dbReference type="InterPro" id="IPR045860">
    <property type="entry name" value="Snake_toxin-like_sf"/>
</dbReference>
<dbReference type="SUPFAM" id="SSF57302">
    <property type="entry name" value="Snake toxin-like"/>
    <property type="match status" value="1"/>
</dbReference>
<sequence length="61" mass="7024">RICYNHLGTKPPTTECTQEDSCYKNIWRNITFDNIRRGCGCFTPRGDMPGPYCCESDKCNL</sequence>
<feature type="chain" id="PRO_0000093658" description="Toxin S5C1" evidence="3">
    <location>
        <begin position="1"/>
        <end position="61"/>
    </location>
</feature>
<feature type="short sequence motif" description="Cell attachment site" evidence="2">
    <location>
        <begin position="45"/>
        <end position="47"/>
    </location>
</feature>
<feature type="disulfide bond" evidence="1">
    <location>
        <begin position="3"/>
        <end position="22"/>
    </location>
</feature>
<feature type="disulfide bond" evidence="1">
    <location>
        <begin position="16"/>
        <end position="39"/>
    </location>
</feature>
<feature type="disulfide bond" evidence="1">
    <location>
        <begin position="41"/>
        <end position="53"/>
    </location>
</feature>
<feature type="disulfide bond" evidence="1">
    <location>
        <begin position="54"/>
        <end position="59"/>
    </location>
</feature>
<proteinExistence type="evidence at protein level"/>
<evidence type="ECO:0000250" key="1">
    <source>
        <dbReference type="UniProtKB" id="P28375"/>
    </source>
</evidence>
<evidence type="ECO:0000255" key="2"/>
<evidence type="ECO:0000269" key="3">
    <source>
    </source>
</evidence>
<evidence type="ECO:0000305" key="4"/>
<protein>
    <recommendedName>
        <fullName>Toxin S5C1</fullName>
    </recommendedName>
</protein>
<accession>P01413</accession>
<comment type="function">
    <text evidence="1">Inhibits ADP-induced platelet aggregation and inhibits the binding of purified platelet fibrinogen receptor alpha-IIb/beta-3 (ITGA2B/ITGB3) to immobilized fibrinogen.</text>
</comment>
<comment type="subcellular location">
    <subcellularLocation>
        <location evidence="3">Secreted</location>
    </subcellularLocation>
</comment>
<comment type="tissue specificity">
    <text evidence="4">Expressed by the venom gland.</text>
</comment>
<comment type="similarity">
    <text evidence="4">Belongs to the three-finger toxin family. Short-chain subfamily. Antiplatelet toxin sub-subfamily.</text>
</comment>
<organism>
    <name type="scientific">Dendroaspis jamesoni kaimosae</name>
    <name type="common">Eastern Jameson's mamba</name>
    <dbReference type="NCBI Taxonomy" id="8619"/>
    <lineage>
        <taxon>Eukaryota</taxon>
        <taxon>Metazoa</taxon>
        <taxon>Chordata</taxon>
        <taxon>Craniata</taxon>
        <taxon>Vertebrata</taxon>
        <taxon>Euteleostomi</taxon>
        <taxon>Lepidosauria</taxon>
        <taxon>Squamata</taxon>
        <taxon>Bifurcata</taxon>
        <taxon>Unidentata</taxon>
        <taxon>Episquamata</taxon>
        <taxon>Toxicofera</taxon>
        <taxon>Serpentes</taxon>
        <taxon>Colubroidea</taxon>
        <taxon>Elapidae</taxon>
        <taxon>Elapinae</taxon>
        <taxon>Dendroaspis</taxon>
    </lineage>
</organism>
<keyword id="KW-1217">Cell adhesion impairing toxin</keyword>
<keyword id="KW-0903">Direct protein sequencing</keyword>
<keyword id="KW-1015">Disulfide bond</keyword>
<keyword id="KW-1199">Hemostasis impairing toxin</keyword>
<keyword id="KW-1201">Platelet aggregation inhibiting toxin</keyword>
<keyword id="KW-0964">Secreted</keyword>
<keyword id="KW-0800">Toxin</keyword>
<reference key="1">
    <citation type="journal article" date="1979" name="Biochim. Biophys. Acta">
        <title>Some properties and the complete primary structures of two reduced and S-carboxymethylated polypeptides (S5C1 and S5C10) from Dendroaspis jamesoni kaimosae (Jameson's mamba) venom.</title>
        <authorList>
            <person name="Joubert F.J."/>
            <person name="Taljaard N."/>
        </authorList>
    </citation>
    <scope>PROTEIN SEQUENCE</scope>
    <scope>SUBCELLULAR LOCATION</scope>
    <source>
        <tissue>Venom</tissue>
    </source>
</reference>